<evidence type="ECO:0000255" key="1">
    <source>
        <dbReference type="HAMAP-Rule" id="MF_00023"/>
    </source>
</evidence>
<evidence type="ECO:0000256" key="2">
    <source>
        <dbReference type="SAM" id="MobiDB-lite"/>
    </source>
</evidence>
<dbReference type="EMBL" id="CP000478">
    <property type="protein sequence ID" value="ABK16469.1"/>
    <property type="molecule type" value="Genomic_DNA"/>
</dbReference>
<dbReference type="RefSeq" id="WP_011697642.1">
    <property type="nucleotide sequence ID" value="NC_008554.1"/>
</dbReference>
<dbReference type="SMR" id="A0LGB7"/>
<dbReference type="FunCoup" id="A0LGB7">
    <property type="interactions" value="468"/>
</dbReference>
<dbReference type="STRING" id="335543.Sfum_0771"/>
<dbReference type="KEGG" id="sfu:Sfum_0771"/>
<dbReference type="eggNOG" id="COG0691">
    <property type="taxonomic scope" value="Bacteria"/>
</dbReference>
<dbReference type="HOGENOM" id="CLU_108953_0_0_7"/>
<dbReference type="InParanoid" id="A0LGB7"/>
<dbReference type="OrthoDB" id="9805462at2"/>
<dbReference type="Proteomes" id="UP000001784">
    <property type="component" value="Chromosome"/>
</dbReference>
<dbReference type="GO" id="GO:0005829">
    <property type="term" value="C:cytosol"/>
    <property type="evidence" value="ECO:0007669"/>
    <property type="project" value="TreeGrafter"/>
</dbReference>
<dbReference type="GO" id="GO:0003723">
    <property type="term" value="F:RNA binding"/>
    <property type="evidence" value="ECO:0007669"/>
    <property type="project" value="UniProtKB-UniRule"/>
</dbReference>
<dbReference type="GO" id="GO:0070929">
    <property type="term" value="P:trans-translation"/>
    <property type="evidence" value="ECO:0007669"/>
    <property type="project" value="UniProtKB-UniRule"/>
</dbReference>
<dbReference type="CDD" id="cd09294">
    <property type="entry name" value="SmpB"/>
    <property type="match status" value="1"/>
</dbReference>
<dbReference type="Gene3D" id="2.40.280.10">
    <property type="match status" value="1"/>
</dbReference>
<dbReference type="HAMAP" id="MF_00023">
    <property type="entry name" value="SmpB"/>
    <property type="match status" value="1"/>
</dbReference>
<dbReference type="InterPro" id="IPR023620">
    <property type="entry name" value="SmpB"/>
</dbReference>
<dbReference type="InterPro" id="IPR000037">
    <property type="entry name" value="SsrA-bd_prot"/>
</dbReference>
<dbReference type="InterPro" id="IPR020081">
    <property type="entry name" value="SsrA-bd_prot_CS"/>
</dbReference>
<dbReference type="NCBIfam" id="NF003843">
    <property type="entry name" value="PRK05422.1"/>
    <property type="match status" value="1"/>
</dbReference>
<dbReference type="NCBIfam" id="TIGR00086">
    <property type="entry name" value="smpB"/>
    <property type="match status" value="1"/>
</dbReference>
<dbReference type="PANTHER" id="PTHR30308:SF2">
    <property type="entry name" value="SSRA-BINDING PROTEIN"/>
    <property type="match status" value="1"/>
</dbReference>
<dbReference type="PANTHER" id="PTHR30308">
    <property type="entry name" value="TMRNA-BINDING COMPONENT OF TRANS-TRANSLATION TAGGING COMPLEX"/>
    <property type="match status" value="1"/>
</dbReference>
<dbReference type="Pfam" id="PF01668">
    <property type="entry name" value="SmpB"/>
    <property type="match status" value="1"/>
</dbReference>
<dbReference type="SUPFAM" id="SSF74982">
    <property type="entry name" value="Small protein B (SmpB)"/>
    <property type="match status" value="1"/>
</dbReference>
<dbReference type="PROSITE" id="PS01317">
    <property type="entry name" value="SSRP"/>
    <property type="match status" value="1"/>
</dbReference>
<keyword id="KW-0963">Cytoplasm</keyword>
<keyword id="KW-1185">Reference proteome</keyword>
<keyword id="KW-0694">RNA-binding</keyword>
<proteinExistence type="inferred from homology"/>
<organism>
    <name type="scientific">Syntrophobacter fumaroxidans (strain DSM 10017 / MPOB)</name>
    <dbReference type="NCBI Taxonomy" id="335543"/>
    <lineage>
        <taxon>Bacteria</taxon>
        <taxon>Pseudomonadati</taxon>
        <taxon>Thermodesulfobacteriota</taxon>
        <taxon>Syntrophobacteria</taxon>
        <taxon>Syntrophobacterales</taxon>
        <taxon>Syntrophobacteraceae</taxon>
        <taxon>Syntrophobacter</taxon>
    </lineage>
</organism>
<accession>A0LGB7</accession>
<protein>
    <recommendedName>
        <fullName evidence="1">SsrA-binding protein</fullName>
    </recommendedName>
    <alternativeName>
        <fullName evidence="1">Small protein B</fullName>
    </alternativeName>
</protein>
<sequence length="161" mass="18893">MTKNKPSTAEKTRLICQNKKAYHDYDILEKFEAGIVLLGTEVKSLREGRANLKDSYARVRKGEVFLQGLHISPYTHASYNNHEPERVRKLLLHAHEIKRLTGKTQERGLALIPLKLYFSKGKVKVELALAQGKKLYDKRESIKRKEENRELDRLRKRRRQE</sequence>
<name>SSRP_SYNFM</name>
<gene>
    <name evidence="1" type="primary">smpB</name>
    <name type="ordered locus">Sfum_0771</name>
</gene>
<feature type="chain" id="PRO_0000331104" description="SsrA-binding protein">
    <location>
        <begin position="1"/>
        <end position="161"/>
    </location>
</feature>
<feature type="region of interest" description="Disordered" evidence="2">
    <location>
        <begin position="139"/>
        <end position="161"/>
    </location>
</feature>
<feature type="compositionally biased region" description="Basic and acidic residues" evidence="2">
    <location>
        <begin position="139"/>
        <end position="153"/>
    </location>
</feature>
<reference key="1">
    <citation type="submission" date="2006-10" db="EMBL/GenBank/DDBJ databases">
        <title>Complete sequence of Syntrophobacter fumaroxidans MPOB.</title>
        <authorList>
            <consortium name="US DOE Joint Genome Institute"/>
            <person name="Copeland A."/>
            <person name="Lucas S."/>
            <person name="Lapidus A."/>
            <person name="Barry K."/>
            <person name="Detter J.C."/>
            <person name="Glavina del Rio T."/>
            <person name="Hammon N."/>
            <person name="Israni S."/>
            <person name="Pitluck S."/>
            <person name="Goltsman E.G."/>
            <person name="Martinez M."/>
            <person name="Schmutz J."/>
            <person name="Larimer F."/>
            <person name="Land M."/>
            <person name="Hauser L."/>
            <person name="Kyrpides N."/>
            <person name="Kim E."/>
            <person name="Boone D.R."/>
            <person name="Brockman F."/>
            <person name="Culley D."/>
            <person name="Ferry J."/>
            <person name="Gunsalus R."/>
            <person name="McInerney M.J."/>
            <person name="Morrison M."/>
            <person name="Plugge C."/>
            <person name="Rohlin L."/>
            <person name="Scholten J."/>
            <person name="Sieber J."/>
            <person name="Stams A.J.M."/>
            <person name="Worm P."/>
            <person name="Henstra A.M."/>
            <person name="Richardson P."/>
        </authorList>
    </citation>
    <scope>NUCLEOTIDE SEQUENCE [LARGE SCALE GENOMIC DNA]</scope>
    <source>
        <strain>DSM 10017 / MPOB</strain>
    </source>
</reference>
<comment type="function">
    <text evidence="1">Required for rescue of stalled ribosomes mediated by trans-translation. Binds to transfer-messenger RNA (tmRNA), required for stable association of tmRNA with ribosomes. tmRNA and SmpB together mimic tRNA shape, replacing the anticodon stem-loop with SmpB. tmRNA is encoded by the ssrA gene; the 2 termini fold to resemble tRNA(Ala) and it encodes a 'tag peptide', a short internal open reading frame. During trans-translation Ala-aminoacylated tmRNA acts like a tRNA, entering the A-site of stalled ribosomes, displacing the stalled mRNA. The ribosome then switches to translate the ORF on the tmRNA; the nascent peptide is terminated with the 'tag peptide' encoded by the tmRNA and targeted for degradation. The ribosome is freed to recommence translation, which seems to be the essential function of trans-translation.</text>
</comment>
<comment type="subcellular location">
    <subcellularLocation>
        <location evidence="1">Cytoplasm</location>
    </subcellularLocation>
    <text evidence="1">The tmRNA-SmpB complex associates with stalled 70S ribosomes.</text>
</comment>
<comment type="similarity">
    <text evidence="1">Belongs to the SmpB family.</text>
</comment>